<accession>Q8D1Y3</accession>
<dbReference type="EC" id="1.17.7.3" evidence="1"/>
<dbReference type="EMBL" id="BA000021">
    <property type="protein sequence ID" value="BAC24719.1"/>
    <property type="molecule type" value="Genomic_DNA"/>
</dbReference>
<dbReference type="SMR" id="Q8D1Y3"/>
<dbReference type="STRING" id="36870.gene:10369082"/>
<dbReference type="KEGG" id="wbr:gcpE"/>
<dbReference type="eggNOG" id="COG0821">
    <property type="taxonomic scope" value="Bacteria"/>
</dbReference>
<dbReference type="HOGENOM" id="CLU_042258_0_0_6"/>
<dbReference type="OrthoDB" id="9803214at2"/>
<dbReference type="UniPathway" id="UPA00056">
    <property type="reaction ID" value="UER00096"/>
</dbReference>
<dbReference type="Proteomes" id="UP000000562">
    <property type="component" value="Chromosome"/>
</dbReference>
<dbReference type="GO" id="GO:0051539">
    <property type="term" value="F:4 iron, 4 sulfur cluster binding"/>
    <property type="evidence" value="ECO:0007669"/>
    <property type="project" value="UniProtKB-UniRule"/>
</dbReference>
<dbReference type="GO" id="GO:0046429">
    <property type="term" value="F:4-hydroxy-3-methylbut-2-en-1-yl diphosphate synthase activity (ferredoxin)"/>
    <property type="evidence" value="ECO:0007669"/>
    <property type="project" value="UniProtKB-UniRule"/>
</dbReference>
<dbReference type="GO" id="GO:0141197">
    <property type="term" value="F:4-hydroxy-3-methylbut-2-enyl-diphosphate synthase activity (flavodoxin)"/>
    <property type="evidence" value="ECO:0007669"/>
    <property type="project" value="UniProtKB-EC"/>
</dbReference>
<dbReference type="GO" id="GO:0005506">
    <property type="term" value="F:iron ion binding"/>
    <property type="evidence" value="ECO:0007669"/>
    <property type="project" value="InterPro"/>
</dbReference>
<dbReference type="GO" id="GO:0019288">
    <property type="term" value="P:isopentenyl diphosphate biosynthetic process, methylerythritol 4-phosphate pathway"/>
    <property type="evidence" value="ECO:0007669"/>
    <property type="project" value="UniProtKB-UniRule"/>
</dbReference>
<dbReference type="GO" id="GO:0016114">
    <property type="term" value="P:terpenoid biosynthetic process"/>
    <property type="evidence" value="ECO:0007669"/>
    <property type="project" value="InterPro"/>
</dbReference>
<dbReference type="FunFam" id="3.20.20.20:FF:000001">
    <property type="entry name" value="4-hydroxy-3-methylbut-2-en-1-yl diphosphate synthase (flavodoxin)"/>
    <property type="match status" value="1"/>
</dbReference>
<dbReference type="Gene3D" id="3.20.20.20">
    <property type="entry name" value="Dihydropteroate synthase-like"/>
    <property type="match status" value="1"/>
</dbReference>
<dbReference type="Gene3D" id="3.30.413.10">
    <property type="entry name" value="Sulfite Reductase Hemoprotein, domain 1"/>
    <property type="match status" value="1"/>
</dbReference>
<dbReference type="HAMAP" id="MF_00159">
    <property type="entry name" value="IspG"/>
    <property type="match status" value="1"/>
</dbReference>
<dbReference type="InterPro" id="IPR011005">
    <property type="entry name" value="Dihydropteroate_synth-like_sf"/>
</dbReference>
<dbReference type="InterPro" id="IPR016425">
    <property type="entry name" value="IspG_bac"/>
</dbReference>
<dbReference type="InterPro" id="IPR004588">
    <property type="entry name" value="IspG_bac-typ"/>
</dbReference>
<dbReference type="InterPro" id="IPR045854">
    <property type="entry name" value="NO2/SO3_Rdtase_4Fe4S_sf"/>
</dbReference>
<dbReference type="NCBIfam" id="TIGR00612">
    <property type="entry name" value="ispG_gcpE"/>
    <property type="match status" value="1"/>
</dbReference>
<dbReference type="NCBIfam" id="NF001540">
    <property type="entry name" value="PRK00366.1"/>
    <property type="match status" value="1"/>
</dbReference>
<dbReference type="PANTHER" id="PTHR30454">
    <property type="entry name" value="4-HYDROXY-3-METHYLBUT-2-EN-1-YL DIPHOSPHATE SYNTHASE"/>
    <property type="match status" value="1"/>
</dbReference>
<dbReference type="PANTHER" id="PTHR30454:SF0">
    <property type="entry name" value="4-HYDROXY-3-METHYLBUT-2-EN-1-YL DIPHOSPHATE SYNTHASE (FERREDOXIN), CHLOROPLASTIC"/>
    <property type="match status" value="1"/>
</dbReference>
<dbReference type="Pfam" id="PF04551">
    <property type="entry name" value="GcpE"/>
    <property type="match status" value="1"/>
</dbReference>
<dbReference type="PIRSF" id="PIRSF004640">
    <property type="entry name" value="IspG"/>
    <property type="match status" value="1"/>
</dbReference>
<dbReference type="SUPFAM" id="SSF51717">
    <property type="entry name" value="Dihydropteroate synthetase-like"/>
    <property type="match status" value="1"/>
</dbReference>
<dbReference type="SUPFAM" id="SSF56014">
    <property type="entry name" value="Nitrite and sulphite reductase 4Fe-4S domain-like"/>
    <property type="match status" value="1"/>
</dbReference>
<comment type="function">
    <text evidence="1">Converts 2C-methyl-D-erythritol 2,4-cyclodiphosphate (ME-2,4cPP) into 1-hydroxy-2-methyl-2-(E)-butenyl 4-diphosphate.</text>
</comment>
<comment type="catalytic activity">
    <reaction evidence="1">
        <text>(2E)-4-hydroxy-3-methylbut-2-enyl diphosphate + oxidized [flavodoxin] + H2O + 2 H(+) = 2-C-methyl-D-erythritol 2,4-cyclic diphosphate + reduced [flavodoxin]</text>
        <dbReference type="Rhea" id="RHEA:43604"/>
        <dbReference type="Rhea" id="RHEA-COMP:10622"/>
        <dbReference type="Rhea" id="RHEA-COMP:10623"/>
        <dbReference type="ChEBI" id="CHEBI:15377"/>
        <dbReference type="ChEBI" id="CHEBI:15378"/>
        <dbReference type="ChEBI" id="CHEBI:57618"/>
        <dbReference type="ChEBI" id="CHEBI:58210"/>
        <dbReference type="ChEBI" id="CHEBI:58483"/>
        <dbReference type="ChEBI" id="CHEBI:128753"/>
        <dbReference type="EC" id="1.17.7.3"/>
    </reaction>
</comment>
<comment type="cofactor">
    <cofactor evidence="1">
        <name>[4Fe-4S] cluster</name>
        <dbReference type="ChEBI" id="CHEBI:49883"/>
    </cofactor>
    <text evidence="1">Binds 1 [4Fe-4S] cluster.</text>
</comment>
<comment type="pathway">
    <text evidence="1">Isoprenoid biosynthesis; isopentenyl diphosphate biosynthesis via DXP pathway; isopentenyl diphosphate from 1-deoxy-D-xylulose 5-phosphate: step 5/6.</text>
</comment>
<comment type="similarity">
    <text evidence="1">Belongs to the IspG family.</text>
</comment>
<gene>
    <name evidence="1" type="primary">ispG</name>
    <name type="synonym">gcpE</name>
    <name type="ordered locus">WIGBR5730</name>
</gene>
<feature type="chain" id="PRO_0000190656" description="4-hydroxy-3-methylbut-2-en-1-yl diphosphate synthase (flavodoxin)">
    <location>
        <begin position="1"/>
        <end position="366"/>
    </location>
</feature>
<feature type="binding site" evidence="1">
    <location>
        <position position="270"/>
    </location>
    <ligand>
        <name>[4Fe-4S] cluster</name>
        <dbReference type="ChEBI" id="CHEBI:49883"/>
    </ligand>
</feature>
<feature type="binding site" evidence="1">
    <location>
        <position position="273"/>
    </location>
    <ligand>
        <name>[4Fe-4S] cluster</name>
        <dbReference type="ChEBI" id="CHEBI:49883"/>
    </ligand>
</feature>
<feature type="binding site" evidence="1">
    <location>
        <position position="305"/>
    </location>
    <ligand>
        <name>[4Fe-4S] cluster</name>
        <dbReference type="ChEBI" id="CHEBI:49883"/>
    </ligand>
</feature>
<feature type="binding site" evidence="1">
    <location>
        <position position="312"/>
    </location>
    <ligand>
        <name>[4Fe-4S] cluster</name>
        <dbReference type="ChEBI" id="CHEBI:49883"/>
    </ligand>
</feature>
<evidence type="ECO:0000255" key="1">
    <source>
        <dbReference type="HAMAP-Rule" id="MF_00159"/>
    </source>
</evidence>
<organism>
    <name type="scientific">Wigglesworthia glossinidia brevipalpis</name>
    <dbReference type="NCBI Taxonomy" id="36870"/>
    <lineage>
        <taxon>Bacteria</taxon>
        <taxon>Pseudomonadati</taxon>
        <taxon>Pseudomonadota</taxon>
        <taxon>Gammaproteobacteria</taxon>
        <taxon>Enterobacterales</taxon>
        <taxon>Erwiniaceae</taxon>
        <taxon>Wigglesworthia</taxon>
    </lineage>
</organism>
<name>ISPG_WIGBR</name>
<protein>
    <recommendedName>
        <fullName evidence="1">4-hydroxy-3-methylbut-2-en-1-yl diphosphate synthase (flavodoxin)</fullName>
        <ecNumber evidence="1">1.17.7.3</ecNumber>
    </recommendedName>
    <alternativeName>
        <fullName evidence="1">1-hydroxy-2-methyl-2-(E)-butenyl 4-diphosphate synthase</fullName>
    </alternativeName>
</protein>
<sequence length="366" mass="40407">MKINNYIIRRKSKKIYIKNVPIGGDSPISVQSMTNTCTTDINSTISQINKLQKAGADIVRVSIPTLEAAESFKIIKRNVSIPIVADIHFDYRIALKAAEYGADCLRINPGNIGKLNRIISVVSTAKEKKLPIRIGVNSGSLEKDIENKYGINNPKSLFESAMRHVNILEKLNFDMFKVSVKSSDVLTCVQSYKLLASKIDQPLHLGITESGSMLHGSIKSSIGIGLLLSEGIGDTLRVSLAADPIEEVKVGFSILRSLNIRKRGINFIACPTCSRQEFDVINVVNVLEKRLEDVITPMNVSVIGCMVNGLGEANRADIGISGSRNKSILFENGLRNNNKINNEEIIDKLEKYIRKKVKILNLKNNC</sequence>
<proteinExistence type="inferred from homology"/>
<reference key="1">
    <citation type="journal article" date="2002" name="Nat. Genet.">
        <title>Genome sequence of the endocellular obligate symbiont of tsetse flies, Wigglesworthia glossinidia.</title>
        <authorList>
            <person name="Akman L."/>
            <person name="Yamashita A."/>
            <person name="Watanabe H."/>
            <person name="Oshima K."/>
            <person name="Shiba T."/>
            <person name="Hattori M."/>
            <person name="Aksoy S."/>
        </authorList>
    </citation>
    <scope>NUCLEOTIDE SEQUENCE [LARGE SCALE GENOMIC DNA]</scope>
</reference>
<keyword id="KW-0004">4Fe-4S</keyword>
<keyword id="KW-0408">Iron</keyword>
<keyword id="KW-0411">Iron-sulfur</keyword>
<keyword id="KW-0414">Isoprene biosynthesis</keyword>
<keyword id="KW-0479">Metal-binding</keyword>
<keyword id="KW-0560">Oxidoreductase</keyword>
<keyword id="KW-1185">Reference proteome</keyword>